<comment type="function">
    <text evidence="1">Participates in both the initiation and recycling phases of transcription. In the presence of the delta subunit, RNAP displays an increased specificity of transcription, a decreased affinity for nucleic acids, and an increased efficiency of RNA synthesis because of enhanced recycling.</text>
</comment>
<comment type="subunit">
    <text evidence="1">RNAP is composed of a core of 2 alpha, a beta and a beta' subunits. The core is associated with a delta subunit and one of several sigma factors.</text>
</comment>
<comment type="similarity">
    <text evidence="1">Belongs to the RpoE family.</text>
</comment>
<organism>
    <name type="scientific">Bacillus pumilus (strain SAFR-032)</name>
    <dbReference type="NCBI Taxonomy" id="315750"/>
    <lineage>
        <taxon>Bacteria</taxon>
        <taxon>Bacillati</taxon>
        <taxon>Bacillota</taxon>
        <taxon>Bacilli</taxon>
        <taxon>Bacillales</taxon>
        <taxon>Bacillaceae</taxon>
        <taxon>Bacillus</taxon>
    </lineage>
</organism>
<keyword id="KW-0240">DNA-directed RNA polymerase</keyword>
<keyword id="KW-0548">Nucleotidyltransferase</keyword>
<keyword id="KW-0804">Transcription</keyword>
<keyword id="KW-0808">Transferase</keyword>
<accession>A8FIE6</accession>
<gene>
    <name evidence="1" type="primary">rpoE</name>
    <name type="ordered locus">BPUM_3361</name>
</gene>
<sequence>MSLKEYSQEQLKHMSLVELAYEIFRDSKTPITFSELIDEMVRLQGIQKSDLDDRLAQFYTDLNIDGRFISLGDQRWGLRSWYPVDQIEEEVQPAVKTKAKKKKTKAAVVEEDFDEIEEEEEIEELEEDLDLVEDDDDLDLDDDEEIEEEIEDFDEDDDEDDDGLTEIDEDDLDDNEEEK</sequence>
<name>RPOE_BACP2</name>
<dbReference type="EMBL" id="CP000813">
    <property type="protein sequence ID" value="ABV64013.1"/>
    <property type="molecule type" value="Genomic_DNA"/>
</dbReference>
<dbReference type="RefSeq" id="WP_012011572.1">
    <property type="nucleotide sequence ID" value="NZ_VEIS01000002.1"/>
</dbReference>
<dbReference type="SMR" id="A8FIE6"/>
<dbReference type="STRING" id="315750.BPUM_3361"/>
<dbReference type="GeneID" id="5622651"/>
<dbReference type="KEGG" id="bpu:BPUM_3361"/>
<dbReference type="eggNOG" id="COG3343">
    <property type="taxonomic scope" value="Bacteria"/>
</dbReference>
<dbReference type="HOGENOM" id="CLU_116648_1_0_9"/>
<dbReference type="OrthoDB" id="401223at2"/>
<dbReference type="Proteomes" id="UP000001355">
    <property type="component" value="Chromosome"/>
</dbReference>
<dbReference type="GO" id="GO:0000428">
    <property type="term" value="C:DNA-directed RNA polymerase complex"/>
    <property type="evidence" value="ECO:0007669"/>
    <property type="project" value="UniProtKB-KW"/>
</dbReference>
<dbReference type="GO" id="GO:0003899">
    <property type="term" value="F:DNA-directed RNA polymerase activity"/>
    <property type="evidence" value="ECO:0007669"/>
    <property type="project" value="UniProtKB-UniRule"/>
</dbReference>
<dbReference type="GO" id="GO:0006351">
    <property type="term" value="P:DNA-templated transcription"/>
    <property type="evidence" value="ECO:0007669"/>
    <property type="project" value="InterPro"/>
</dbReference>
<dbReference type="GO" id="GO:0006355">
    <property type="term" value="P:regulation of DNA-templated transcription"/>
    <property type="evidence" value="ECO:0007669"/>
    <property type="project" value="UniProtKB-UniRule"/>
</dbReference>
<dbReference type="Gene3D" id="1.10.10.1250">
    <property type="entry name" value="RNA polymerase, subunit delta, N-terminal domain"/>
    <property type="match status" value="1"/>
</dbReference>
<dbReference type="HAMAP" id="MF_00357">
    <property type="entry name" value="RNApol_bact_RpoE"/>
    <property type="match status" value="1"/>
</dbReference>
<dbReference type="InterPro" id="IPR007759">
    <property type="entry name" value="Asxl_HARE-HTH"/>
</dbReference>
<dbReference type="InterPro" id="IPR038087">
    <property type="entry name" value="RNAP_delta_N_dom_sf"/>
</dbReference>
<dbReference type="InterPro" id="IPR029757">
    <property type="entry name" value="RpoE"/>
</dbReference>
<dbReference type="NCBIfam" id="TIGR04567">
    <property type="entry name" value="RNAP_delt_lowGC"/>
    <property type="match status" value="1"/>
</dbReference>
<dbReference type="Pfam" id="PF05066">
    <property type="entry name" value="HARE-HTH"/>
    <property type="match status" value="1"/>
</dbReference>
<dbReference type="PROSITE" id="PS51913">
    <property type="entry name" value="HTH_HARE"/>
    <property type="match status" value="1"/>
</dbReference>
<reference key="1">
    <citation type="journal article" date="2007" name="PLoS ONE">
        <title>Paradoxical DNA repair and peroxide resistance gene conservation in Bacillus pumilus SAFR-032.</title>
        <authorList>
            <person name="Gioia J."/>
            <person name="Yerrapragada S."/>
            <person name="Qin X."/>
            <person name="Jiang H."/>
            <person name="Igboeli O.C."/>
            <person name="Muzny D."/>
            <person name="Dugan-Rocha S."/>
            <person name="Ding Y."/>
            <person name="Hawes A."/>
            <person name="Liu W."/>
            <person name="Perez L."/>
            <person name="Kovar C."/>
            <person name="Dinh H."/>
            <person name="Lee S."/>
            <person name="Nazareth L."/>
            <person name="Blyth P."/>
            <person name="Holder M."/>
            <person name="Buhay C."/>
            <person name="Tirumalai M.R."/>
            <person name="Liu Y."/>
            <person name="Dasgupta I."/>
            <person name="Bokhetache L."/>
            <person name="Fujita M."/>
            <person name="Karouia F."/>
            <person name="Eswara Moorthy P."/>
            <person name="Siefert J."/>
            <person name="Uzman A."/>
            <person name="Buzumbo P."/>
            <person name="Verma A."/>
            <person name="Zwiya H."/>
            <person name="McWilliams B.D."/>
            <person name="Olowu A."/>
            <person name="Clinkenbeard K.D."/>
            <person name="Newcombe D."/>
            <person name="Golebiewski L."/>
            <person name="Petrosino J.F."/>
            <person name="Nicholson W.L."/>
            <person name="Fox G.E."/>
            <person name="Venkateswaran K."/>
            <person name="Highlander S.K."/>
            <person name="Weinstock G.M."/>
        </authorList>
    </citation>
    <scope>NUCLEOTIDE SEQUENCE [LARGE SCALE GENOMIC DNA]</scope>
    <source>
        <strain>SAFR-032</strain>
    </source>
</reference>
<evidence type="ECO:0000255" key="1">
    <source>
        <dbReference type="HAMAP-Rule" id="MF_00357"/>
    </source>
</evidence>
<evidence type="ECO:0000255" key="2">
    <source>
        <dbReference type="PROSITE-ProRule" id="PRU01261"/>
    </source>
</evidence>
<evidence type="ECO:0000256" key="3">
    <source>
        <dbReference type="SAM" id="MobiDB-lite"/>
    </source>
</evidence>
<feature type="chain" id="PRO_1000059839" description="Probable DNA-directed RNA polymerase subunit delta">
    <location>
        <begin position="1"/>
        <end position="179"/>
    </location>
</feature>
<feature type="domain" description="HTH HARE-type" evidence="2">
    <location>
        <begin position="14"/>
        <end position="81"/>
    </location>
</feature>
<feature type="region of interest" description="Disordered" evidence="3">
    <location>
        <begin position="108"/>
        <end position="179"/>
    </location>
</feature>
<feature type="compositionally biased region" description="Acidic residues" evidence="3">
    <location>
        <begin position="109"/>
        <end position="179"/>
    </location>
</feature>
<protein>
    <recommendedName>
        <fullName evidence="1">Probable DNA-directed RNA polymerase subunit delta</fullName>
    </recommendedName>
    <alternativeName>
        <fullName evidence="1">RNAP delta factor</fullName>
    </alternativeName>
</protein>
<proteinExistence type="inferred from homology"/>